<accession>O94453</accession>
<protein>
    <recommendedName>
        <fullName evidence="1">Ubiquinone biosynthesis protein coq4, mitochondrial</fullName>
    </recommendedName>
    <alternativeName>
        <fullName>4-hydroxy-3-methoxy-5-polyprenylbenzoate decarboxylase</fullName>
        <ecNumber evidence="1">4.1.1.130</ecNumber>
    </alternativeName>
    <alternativeName>
        <fullName evidence="1">Coenzyme Q biosynthesis protein 4</fullName>
    </alternativeName>
</protein>
<sequence>MFYLNAHLEINKVVDVVMSLSKKFLKPSVASNQLRLLFTAAERKVNYPGHVPLSPLQRIFLVAGSAIMGLKAPWRGGDMISVLGDASGQPFFLHRLLNKMLVDKTGREILKDKPRMTSKSLNLPFLRTLPPNTLGKIYVDWIDKEHVGPDTRSPTRFVDDPEEAYVMQRYRESHDFYHAICNMPTNIEGELAIKWLEFVNMGLPVGALSALFGPLRLNCEQASRFRRVYIPWSIRNGLNAKTLINVYWEKELTNDIEDVRRRIRIEAAPPLV</sequence>
<evidence type="ECO:0000255" key="1">
    <source>
        <dbReference type="HAMAP-Rule" id="MF_03111"/>
    </source>
</evidence>
<evidence type="ECO:0000269" key="2">
    <source>
    </source>
</evidence>
<evidence type="ECO:0000269" key="3">
    <source>
    </source>
</evidence>
<keyword id="KW-0456">Lyase</keyword>
<keyword id="KW-0472">Membrane</keyword>
<keyword id="KW-0479">Metal-binding</keyword>
<keyword id="KW-0496">Mitochondrion</keyword>
<keyword id="KW-0999">Mitochondrion inner membrane</keyword>
<keyword id="KW-1185">Reference proteome</keyword>
<keyword id="KW-0831">Ubiquinone biosynthesis</keyword>
<keyword id="KW-0862">Zinc</keyword>
<proteinExistence type="inferred from homology"/>
<organism>
    <name type="scientific">Schizosaccharomyces pombe (strain 972 / ATCC 24843)</name>
    <name type="common">Fission yeast</name>
    <dbReference type="NCBI Taxonomy" id="284812"/>
    <lineage>
        <taxon>Eukaryota</taxon>
        <taxon>Fungi</taxon>
        <taxon>Dikarya</taxon>
        <taxon>Ascomycota</taxon>
        <taxon>Taphrinomycotina</taxon>
        <taxon>Schizosaccharomycetes</taxon>
        <taxon>Schizosaccharomycetales</taxon>
        <taxon>Schizosaccharomycetaceae</taxon>
        <taxon>Schizosaccharomyces</taxon>
    </lineage>
</organism>
<dbReference type="EC" id="4.1.1.130" evidence="1"/>
<dbReference type="EMBL" id="CU329670">
    <property type="protein sequence ID" value="CAA22606.1"/>
    <property type="molecule type" value="Genomic_DNA"/>
</dbReference>
<dbReference type="PIR" id="T37755">
    <property type="entry name" value="T37755"/>
</dbReference>
<dbReference type="RefSeq" id="NP_593130.1">
    <property type="nucleotide sequence ID" value="NM_001018526.2"/>
</dbReference>
<dbReference type="SMR" id="O94453"/>
<dbReference type="BioGRID" id="278121">
    <property type="interactions" value="3"/>
</dbReference>
<dbReference type="FunCoup" id="O94453">
    <property type="interactions" value="402"/>
</dbReference>
<dbReference type="STRING" id="284812.O94453"/>
<dbReference type="iPTMnet" id="O94453"/>
<dbReference type="PaxDb" id="4896-SPAC1687.12c.1"/>
<dbReference type="EnsemblFungi" id="SPAC1687.12c.1">
    <property type="protein sequence ID" value="SPAC1687.12c.1:pep"/>
    <property type="gene ID" value="SPAC1687.12c"/>
</dbReference>
<dbReference type="GeneID" id="2541625"/>
<dbReference type="KEGG" id="spo:2541625"/>
<dbReference type="PomBase" id="SPAC1687.12c">
    <property type="gene designation" value="coq4"/>
</dbReference>
<dbReference type="VEuPathDB" id="FungiDB:SPAC1687.12c"/>
<dbReference type="eggNOG" id="KOG3244">
    <property type="taxonomic scope" value="Eukaryota"/>
</dbReference>
<dbReference type="HOGENOM" id="CLU_061241_0_0_1"/>
<dbReference type="InParanoid" id="O94453"/>
<dbReference type="OMA" id="YYERHFH"/>
<dbReference type="PhylomeDB" id="O94453"/>
<dbReference type="Reactome" id="R-SPO-2142789">
    <property type="pathway name" value="Ubiquinol biosynthesis"/>
</dbReference>
<dbReference type="UniPathway" id="UPA00232"/>
<dbReference type="PRO" id="PR:O94453"/>
<dbReference type="Proteomes" id="UP000002485">
    <property type="component" value="Chromosome I"/>
</dbReference>
<dbReference type="GO" id="GO:0031314">
    <property type="term" value="C:extrinsic component of mitochondrial inner membrane"/>
    <property type="evidence" value="ECO:0007669"/>
    <property type="project" value="UniProtKB-UniRule"/>
</dbReference>
<dbReference type="GO" id="GO:0005739">
    <property type="term" value="C:mitochondrion"/>
    <property type="evidence" value="ECO:0000314"/>
    <property type="project" value="PomBase"/>
</dbReference>
<dbReference type="GO" id="GO:0120539">
    <property type="term" value="F:4-hydroxy-3-methoxy-5-polyprenylbenzoate decarboxylase activity"/>
    <property type="evidence" value="ECO:0000250"/>
    <property type="project" value="UniProtKB"/>
</dbReference>
<dbReference type="GO" id="GO:0006744">
    <property type="term" value="P:ubiquinone biosynthetic process"/>
    <property type="evidence" value="ECO:0000315"/>
    <property type="project" value="PomBase"/>
</dbReference>
<dbReference type="HAMAP" id="MF_03111">
    <property type="entry name" value="Coq4"/>
    <property type="match status" value="1"/>
</dbReference>
<dbReference type="InterPro" id="IPR007715">
    <property type="entry name" value="Coq4"/>
</dbReference>
<dbReference type="InterPro" id="IPR027540">
    <property type="entry name" value="Coq4_euk"/>
</dbReference>
<dbReference type="PANTHER" id="PTHR12922">
    <property type="entry name" value="UBIQUINONE BIOSYNTHESIS PROTEIN"/>
    <property type="match status" value="1"/>
</dbReference>
<dbReference type="PANTHER" id="PTHR12922:SF7">
    <property type="entry name" value="UBIQUINONE BIOSYNTHESIS PROTEIN COQ4 HOMOLOG, MITOCHONDRIAL"/>
    <property type="match status" value="1"/>
</dbReference>
<dbReference type="Pfam" id="PF05019">
    <property type="entry name" value="Coq4"/>
    <property type="match status" value="1"/>
</dbReference>
<reference key="1">
    <citation type="journal article" date="2002" name="Nature">
        <title>The genome sequence of Schizosaccharomyces pombe.</title>
        <authorList>
            <person name="Wood V."/>
            <person name="Gwilliam R."/>
            <person name="Rajandream M.A."/>
            <person name="Lyne M.H."/>
            <person name="Lyne R."/>
            <person name="Stewart A."/>
            <person name="Sgouros J.G."/>
            <person name="Peat N."/>
            <person name="Hayles J."/>
            <person name="Baker S.G."/>
            <person name="Basham D."/>
            <person name="Bowman S."/>
            <person name="Brooks K."/>
            <person name="Brown D."/>
            <person name="Brown S."/>
            <person name="Chillingworth T."/>
            <person name="Churcher C.M."/>
            <person name="Collins M."/>
            <person name="Connor R."/>
            <person name="Cronin A."/>
            <person name="Davis P."/>
            <person name="Feltwell T."/>
            <person name="Fraser A."/>
            <person name="Gentles S."/>
            <person name="Goble A."/>
            <person name="Hamlin N."/>
            <person name="Harris D.E."/>
            <person name="Hidalgo J."/>
            <person name="Hodgson G."/>
            <person name="Holroyd S."/>
            <person name="Hornsby T."/>
            <person name="Howarth S."/>
            <person name="Huckle E.J."/>
            <person name="Hunt S."/>
            <person name="Jagels K."/>
            <person name="James K.D."/>
            <person name="Jones L."/>
            <person name="Jones M."/>
            <person name="Leather S."/>
            <person name="McDonald S."/>
            <person name="McLean J."/>
            <person name="Mooney P."/>
            <person name="Moule S."/>
            <person name="Mungall K.L."/>
            <person name="Murphy L.D."/>
            <person name="Niblett D."/>
            <person name="Odell C."/>
            <person name="Oliver K."/>
            <person name="O'Neil S."/>
            <person name="Pearson D."/>
            <person name="Quail M.A."/>
            <person name="Rabbinowitsch E."/>
            <person name="Rutherford K.M."/>
            <person name="Rutter S."/>
            <person name="Saunders D."/>
            <person name="Seeger K."/>
            <person name="Sharp S."/>
            <person name="Skelton J."/>
            <person name="Simmonds M.N."/>
            <person name="Squares R."/>
            <person name="Squares S."/>
            <person name="Stevens K."/>
            <person name="Taylor K."/>
            <person name="Taylor R.G."/>
            <person name="Tivey A."/>
            <person name="Walsh S.V."/>
            <person name="Warren T."/>
            <person name="Whitehead S."/>
            <person name="Woodward J.R."/>
            <person name="Volckaert G."/>
            <person name="Aert R."/>
            <person name="Robben J."/>
            <person name="Grymonprez B."/>
            <person name="Weltjens I."/>
            <person name="Vanstreels E."/>
            <person name="Rieger M."/>
            <person name="Schaefer M."/>
            <person name="Mueller-Auer S."/>
            <person name="Gabel C."/>
            <person name="Fuchs M."/>
            <person name="Duesterhoeft A."/>
            <person name="Fritzc C."/>
            <person name="Holzer E."/>
            <person name="Moestl D."/>
            <person name="Hilbert H."/>
            <person name="Borzym K."/>
            <person name="Langer I."/>
            <person name="Beck A."/>
            <person name="Lehrach H."/>
            <person name="Reinhardt R."/>
            <person name="Pohl T.M."/>
            <person name="Eger P."/>
            <person name="Zimmermann W."/>
            <person name="Wedler H."/>
            <person name="Wambutt R."/>
            <person name="Purnelle B."/>
            <person name="Goffeau A."/>
            <person name="Cadieu E."/>
            <person name="Dreano S."/>
            <person name="Gloux S."/>
            <person name="Lelaure V."/>
            <person name="Mottier S."/>
            <person name="Galibert F."/>
            <person name="Aves S.J."/>
            <person name="Xiang Z."/>
            <person name="Hunt C."/>
            <person name="Moore K."/>
            <person name="Hurst S.M."/>
            <person name="Lucas M."/>
            <person name="Rochet M."/>
            <person name="Gaillardin C."/>
            <person name="Tallada V.A."/>
            <person name="Garzon A."/>
            <person name="Thode G."/>
            <person name="Daga R.R."/>
            <person name="Cruzado L."/>
            <person name="Jimenez J."/>
            <person name="Sanchez M."/>
            <person name="del Rey F."/>
            <person name="Benito J."/>
            <person name="Dominguez A."/>
            <person name="Revuelta J.L."/>
            <person name="Moreno S."/>
            <person name="Armstrong J."/>
            <person name="Forsburg S.L."/>
            <person name="Cerutti L."/>
            <person name="Lowe T."/>
            <person name="McCombie W.R."/>
            <person name="Paulsen I."/>
            <person name="Potashkin J."/>
            <person name="Shpakovski G.V."/>
            <person name="Ussery D."/>
            <person name="Barrell B.G."/>
            <person name="Nurse P."/>
        </authorList>
    </citation>
    <scope>NUCLEOTIDE SEQUENCE [LARGE SCALE GENOMIC DNA]</scope>
    <source>
        <strain>972 / ATCC 24843</strain>
    </source>
</reference>
<reference key="2">
    <citation type="journal article" date="2006" name="Nat. Biotechnol.">
        <title>ORFeome cloning and global analysis of protein localization in the fission yeast Schizosaccharomyces pombe.</title>
        <authorList>
            <person name="Matsuyama A."/>
            <person name="Arai R."/>
            <person name="Yashiroda Y."/>
            <person name="Shirai A."/>
            <person name="Kamata A."/>
            <person name="Sekido S."/>
            <person name="Kobayashi Y."/>
            <person name="Hashimoto A."/>
            <person name="Hamamoto M."/>
            <person name="Hiraoka Y."/>
            <person name="Horinouchi S."/>
            <person name="Yoshida M."/>
        </authorList>
    </citation>
    <scope>SUBCELLULAR LOCATION [LARGE SCALE ANALYSIS]</scope>
</reference>
<reference key="3">
    <citation type="journal article" date="2014" name="PLoS ONE">
        <title>Functional conservation of coenzyme Q biosynthetic genes among yeasts, plants, and humans.</title>
        <authorList>
            <person name="Hayashi K."/>
            <person name="Ogiyama Y."/>
            <person name="Yokomi K."/>
            <person name="Nakagawa T."/>
            <person name="Kaino T."/>
            <person name="Kawamukai M."/>
        </authorList>
    </citation>
    <scope>SUBCELLULAR LOCATION</scope>
    <scope>PATHWAY</scope>
</reference>
<feature type="chain" id="PRO_0000115244" description="Ubiquinone biosynthesis protein coq4, mitochondrial">
    <location>
        <begin position="1"/>
        <end position="272"/>
    </location>
</feature>
<feature type="binding site" evidence="1">
    <location>
        <position position="174"/>
    </location>
    <ligand>
        <name>Zn(2+)</name>
        <dbReference type="ChEBI" id="CHEBI:29105"/>
    </ligand>
</feature>
<feature type="binding site" evidence="1">
    <location>
        <position position="175"/>
    </location>
    <ligand>
        <name>Zn(2+)</name>
        <dbReference type="ChEBI" id="CHEBI:29105"/>
    </ligand>
</feature>
<feature type="binding site" evidence="1">
    <location>
        <position position="178"/>
    </location>
    <ligand>
        <name>Zn(2+)</name>
        <dbReference type="ChEBI" id="CHEBI:29105"/>
    </ligand>
</feature>
<feature type="binding site" evidence="1">
    <location>
        <position position="190"/>
    </location>
    <ligand>
        <name>Zn(2+)</name>
        <dbReference type="ChEBI" id="CHEBI:29105"/>
    </ligand>
</feature>
<gene>
    <name type="primary">coq4</name>
    <name type="ORF">SPAC1687.12c</name>
</gene>
<name>COQ4_SCHPO</name>
<comment type="function">
    <text evidence="1">Lyase that catalyzes the C1-decarboxylation of 4-hydroxy-3-methoxy-5-(all-trans-decaprenyl)benzoic acid into 2-methoxy-6-(all-trans-decaprenyl)phenol during ubiquinone biosynthesis.</text>
</comment>
<comment type="catalytic activity">
    <reaction evidence="1">
        <text>4-hydroxy-3-methoxy-5-(all-trans-decaprenyl)benzoate + H(+) = 2-methoxy-6-(all-trans-decaprenyl)phenol + CO2</text>
        <dbReference type="Rhea" id="RHEA:81275"/>
        <dbReference type="ChEBI" id="CHEBI:15378"/>
        <dbReference type="ChEBI" id="CHEBI:16526"/>
        <dbReference type="ChEBI" id="CHEBI:50774"/>
        <dbReference type="ChEBI" id="CHEBI:62796"/>
        <dbReference type="EC" id="4.1.1.130"/>
    </reaction>
</comment>
<comment type="cofactor">
    <cofactor evidence="1">
        <name>Zn(2+)</name>
        <dbReference type="ChEBI" id="CHEBI:29105"/>
    </cofactor>
</comment>
<comment type="pathway">
    <text evidence="1 3">Cofactor biosynthesis; ubiquinone biosynthesis.</text>
</comment>
<comment type="subunit">
    <text evidence="1">Component of a multi-subunit COQ enzyme complex, composed of at least coq3, coq4, coq5, coq6, coq7 and coq9.</text>
</comment>
<comment type="subcellular location">
    <subcellularLocation>
        <location evidence="1 2 3">Mitochondrion inner membrane</location>
        <topology evidence="1 2">Peripheral membrane protein</topology>
        <orientation evidence="1 2">Matrix side</orientation>
    </subcellularLocation>
</comment>
<comment type="miscellaneous">
    <text evidence="1">This protein may be expected to contain an N-terminal transit peptide but none has been predicted.</text>
</comment>
<comment type="similarity">
    <text evidence="1">Belongs to the COQ4 family.</text>
</comment>